<comment type="function">
    <molecule>Serine protease p27</molecule>
    <text evidence="2">Responsible for the cleavage of the polyprotein into functional products.</text>
</comment>
<comment type="function">
    <molecule>Viral genome-linked protein</molecule>
    <text evidence="3">Protein covalently attached to the 5' extremity of the genomic and subgenomic RNAs (By similarity). It may serve as a primer for the replicase (By similarity).</text>
</comment>
<comment type="catalytic activity">
    <reaction evidence="5">
        <text>RNA(n) + a ribonucleoside 5'-triphosphate = RNA(n+1) + diphosphate</text>
        <dbReference type="Rhea" id="RHEA:21248"/>
        <dbReference type="Rhea" id="RHEA-COMP:14527"/>
        <dbReference type="Rhea" id="RHEA-COMP:17342"/>
        <dbReference type="ChEBI" id="CHEBI:33019"/>
        <dbReference type="ChEBI" id="CHEBI:61557"/>
        <dbReference type="ChEBI" id="CHEBI:140395"/>
        <dbReference type="EC" id="2.7.7.48"/>
    </reaction>
</comment>
<comment type="subunit">
    <molecule>Serine protease p27</molecule>
    <text evidence="2">Monomer.</text>
</comment>
<comment type="subcellular location">
    <molecule>Transmembrane protein 1A</molecule>
    <subcellularLocation>
        <location evidence="8">Host membrane</location>
        <topology evidence="8">Multi-pass membrane protein</topology>
    </subcellularLocation>
</comment>
<comment type="alternative products">
    <event type="ribosomal frameshifting"/>
    <isoform>
        <id>Q67726-1</id>
        <name evidence="7">nsp1ab</name>
        <sequence type="displayed"/>
    </isoform>
    <isoform>
        <id>P0C6K4-1</id>
        <name evidence="7">nsp1a</name>
        <sequence type="external"/>
    </isoform>
</comment>
<comment type="PTM">
    <text evidence="2">Cleaved by the viral and host proteases (By similarity). The protease is probably autocatalytically cleaved (By similarity).</text>
</comment>
<comment type="miscellaneous">
    <molecule>Isoform nsp1ab</molecule>
    <text>Generated by a ribosomal frameshift at position 919.</text>
</comment>
<comment type="similarity">
    <text evidence="8">Belongs to the astroviridae polyprotein 1AB family.</text>
</comment>
<name>NS1AB_HASV1</name>
<organismHost>
    <name type="scientific">Homo sapiens</name>
    <name type="common">Human</name>
    <dbReference type="NCBI Taxonomy" id="9606"/>
</organismHost>
<feature type="chain" id="PRO_0000327271" description="Non-structural polyprotein 1AB">
    <location>
        <begin position="1"/>
        <end position="1436"/>
    </location>
</feature>
<feature type="chain" id="PRO_0000327272" description="Protein p19" evidence="4">
    <location>
        <begin position="1"/>
        <end position="175"/>
    </location>
</feature>
<feature type="chain" id="PRO_0000327273" description="Transmembrane protein 1A" evidence="4">
    <location>
        <begin position="176"/>
        <end position="419"/>
    </location>
</feature>
<feature type="chain" id="PRO_0000327274" description="Serine protease p27" evidence="4">
    <location>
        <begin position="420"/>
        <end position="664"/>
    </location>
</feature>
<feature type="chain" id="PRO_0000419586" description="Viral genome-linked protein" evidence="4">
    <location>
        <begin position="665"/>
        <end position="755"/>
    </location>
</feature>
<feature type="chain" id="PRO_0000327275" description="Protein p20" evidence="4">
    <location>
        <begin position="756"/>
        <end position="933"/>
    </location>
</feature>
<feature type="chain" id="PRO_0000327276" description="RNA-directed RNA polymerase p57" evidence="4">
    <location>
        <begin position="934"/>
        <end position="1436"/>
    </location>
</feature>
<feature type="transmembrane region" description="Helical" evidence="4">
    <location>
        <begin position="156"/>
        <end position="176"/>
    </location>
</feature>
<feature type="transmembrane region" description="Helical" evidence="4">
    <location>
        <begin position="239"/>
        <end position="259"/>
    </location>
</feature>
<feature type="transmembrane region" description="Helical" evidence="4">
    <location>
        <begin position="286"/>
        <end position="306"/>
    </location>
</feature>
<feature type="transmembrane region" description="Helical" evidence="4">
    <location>
        <begin position="313"/>
        <end position="333"/>
    </location>
</feature>
<feature type="transmembrane region" description="Helical" evidence="4">
    <location>
        <begin position="344"/>
        <end position="364"/>
    </location>
</feature>
<feature type="domain" description="RdRp catalytic" evidence="5">
    <location>
        <begin position="1181"/>
        <end position="1307"/>
    </location>
</feature>
<feature type="region of interest" description="Disordered" evidence="6">
    <location>
        <begin position="756"/>
        <end position="828"/>
    </location>
</feature>
<feature type="region of interest" description="Disordered" evidence="6">
    <location>
        <begin position="913"/>
        <end position="934"/>
    </location>
</feature>
<feature type="coiled-coil region" evidence="4">
    <location>
        <begin position="104"/>
        <end position="142"/>
    </location>
</feature>
<feature type="coiled-coil region" evidence="4">
    <location>
        <begin position="587"/>
        <end position="620"/>
    </location>
</feature>
<feature type="active site" description="Charge relay system; for serine protease activity" evidence="1">
    <location>
        <position position="461"/>
    </location>
</feature>
<feature type="active site" description="Charge relay system; for serine protease activity" evidence="1">
    <location>
        <position position="489"/>
    </location>
</feature>
<feature type="active site" description="Charge relay system; for serine protease activity" evidence="1">
    <location>
        <position position="551"/>
    </location>
</feature>
<feature type="site" description="Cleavage" evidence="4">
    <location>
        <begin position="175"/>
        <end position="176"/>
    </location>
</feature>
<feature type="site" description="Cleavage" evidence="4">
    <location>
        <begin position="419"/>
        <end position="420"/>
    </location>
</feature>
<feature type="site" description="Cleavage" evidence="2">
    <location>
        <begin position="664"/>
        <end position="665"/>
    </location>
</feature>
<feature type="site" description="Cleavage" evidence="4">
    <location>
        <begin position="755"/>
        <end position="756"/>
    </location>
</feature>
<feature type="site" description="Cleavage" evidence="4">
    <location>
        <begin position="933"/>
        <end position="934"/>
    </location>
</feature>
<feature type="modified residue" description="O-(5'-phospho-RNA)-tyrosine" evidence="3">
    <location>
        <position position="693"/>
    </location>
</feature>
<reference key="1">
    <citation type="journal article" date="1994" name="J. Gen. Virol.">
        <title>The complete sequence of a human astrovirus.</title>
        <authorList>
            <person name="Willcocks M.M."/>
            <person name="Brown T.D."/>
            <person name="Madeley C.R."/>
            <person name="Carter M.J."/>
        </authorList>
    </citation>
    <scope>NUCLEOTIDE SEQUENCE [GENOMIC RNA]</scope>
</reference>
<reference key="2">
    <citation type="journal article" date="1994" name="J. Virol.">
        <title>Analysis of astrovirus serotype 1 RNA, identification of the viral RNA-dependent RNA polymerase motif, and expression of a viral structural protein.</title>
        <authorList>
            <person name="Lewis T.L."/>
            <person name="Greenberg H.B."/>
            <person name="Herrmann J.E."/>
            <person name="Smith L.S."/>
            <person name="Matsui S.M."/>
        </authorList>
    </citation>
    <scope>NUCLEOTIDE SEQUENCE [GENOMIC RNA]</scope>
    <scope>RIBOSOMAL FRAMESHIFT</scope>
</reference>
<reference key="3">
    <citation type="journal article" date="2002" name="J. Virol.">
        <title>Processing of nonstructural protein 1a of human astrovirus.</title>
        <authorList>
            <person name="Geigenmuller U."/>
            <person name="Chew T."/>
            <person name="Ginzton N."/>
            <person name="Matsui S.M."/>
        </authorList>
    </citation>
    <scope>PROTEOLYTIC PROCESSING OF POLYPROTEIN</scope>
</reference>
<keyword id="KW-0067">ATP-binding</keyword>
<keyword id="KW-0175">Coiled coil</keyword>
<keyword id="KW-0191">Covalent protein-RNA linkage</keyword>
<keyword id="KW-1043">Host membrane</keyword>
<keyword id="KW-0378">Hydrolase</keyword>
<keyword id="KW-0472">Membrane</keyword>
<keyword id="KW-0547">Nucleotide-binding</keyword>
<keyword id="KW-0548">Nucleotidyltransferase</keyword>
<keyword id="KW-0597">Phosphoprotein</keyword>
<keyword id="KW-0645">Protease</keyword>
<keyword id="KW-1185">Reference proteome</keyword>
<keyword id="KW-0688">Ribosomal frameshifting</keyword>
<keyword id="KW-0696">RNA-directed RNA polymerase</keyword>
<keyword id="KW-0720">Serine protease</keyword>
<keyword id="KW-0808">Transferase</keyword>
<keyword id="KW-0812">Transmembrane</keyword>
<keyword id="KW-1133">Transmembrane helix</keyword>
<keyword id="KW-0693">Viral RNA replication</keyword>
<gene>
    <name type="primary">ORF1</name>
</gene>
<protein>
    <recommendedName>
        <fullName>Non-structural polyprotein 1AB</fullName>
    </recommendedName>
    <component>
        <recommendedName>
            <fullName>Protein p19</fullName>
        </recommendedName>
    </component>
    <component>
        <recommendedName>
            <fullName>Transmembrane protein 1A</fullName>
        </recommendedName>
    </component>
    <component>
        <recommendedName>
            <fullName>Serine protease p27</fullName>
            <shortName>p27</shortName>
            <ecNumber evidence="2">3.4.21.-</ecNumber>
        </recommendedName>
    </component>
    <component>
        <recommendedName>
            <fullName>Viral genome-linked protein</fullName>
        </recommendedName>
        <alternativeName>
            <fullName>VPg</fullName>
        </alternativeName>
    </component>
    <component>
        <recommendedName>
            <fullName>Protein p20</fullName>
        </recommendedName>
    </component>
    <component>
        <recommendedName>
            <fullName>RNA-directed RNA polymerase p57</fullName>
            <shortName>p57</shortName>
            <ecNumber>2.7.7.48</ecNumber>
        </recommendedName>
    </component>
</protein>
<sequence>MAYGEPYYSSKPDKDFNFGSTMARRQMTPTMVTKLPKFVRNSPQAYDWIVRGLIFPTIGKTYFQRVVVITGGLEDGTYGSFAFDGKEWVGIYPIEHLNLMSSLKLIHKANALQERLRLSQEEKATLALDVQFLQHENVRLKEMIPKPEPRKIQMKWIIMGAVLTFLSLIPGGYAHSQTNNTIFTDMIAACKYSTETLTENLDLRIKLALANITISDKLDAVRQILNFAFVPRAHWLRTVFYYIHYYEMWNIFMFVLAIGTVMRSARPGTDLVTLATSHLSGFRMAVLPTIPFHTTMTLWVMNTLMVCYYFDNLLAITLAILAPILGIIFLCFMEDSNYVSQIRGLIATAVLIAGGHACLTLTGTTTSLFVVILTCRFIRMATVFIGTRFEIRDANGKVVATVPTRIKNVAFDFFQKLKQSGVRVGVNEFVVIKPGALCVIDTPEGKGTGFFSGNDIVTAAHVVGNNTFVNVCYEGLMYEAKVRYMPEKDIAFLTCPGDLHPTARLKLSKNPDYSCVTVMAYVNEDLVVSTAAAMVHGNTLSYAVRTQDGMSGAPVCDKYGRVLAVHQTNTGYTGGAVIIDPADFHPVKAPSQVELLKEEIERLKAQLNSATENATTVVTQQPSAALEQKSVSDSDVVDLVRTAMEREMKVLRDEINGILAPFLQKKKGKTKHGRGRVRRNLRKGVKLLTEEEYRELLEKGLDRETFLDLIDRIIGERSGYPDYDDEDYYDEDDDGWGMVGDDVEFDYTEVINFDQAKPIPAPRTTKQKICPEPEVESQPLDLSQKKEKQSEYEQQVVKSTKPQQLEHEQQVVKPIKPQKSEPQPYSQTYGKAPIWESYDFDWDEDDAKFILPAPHRLTKADEIVLGSKIVKLRTIIETAIKTQNYSALPEAVFELDKAAYEAGLEGFLQRVKSKNKAPEKQGPKKLQRAPEDQGAQNYHSLDAWKLLLEPPRERRCVPANFPLLGHLPINRPIFDDKKPRDDLLGLLPEPTWHAFEEYGPTTWGPQAFIKSFDKFFYAEPIDFFSEYPQLCAFADWATYREFRYLEDTRVIHITATEKNTDSTPAYPKMNYFDTEENYLEAHGWAPYIREFTRVYKGDKPEVLWYLFLKKEIIKEEKIRNSDIRQIVCADPIYTRIGACLEAHQNALMKQHTDTSVGQCGWSPMEGGFKKTMQRLVNKGNKHFIEFDWTRYDGTIPPALFKHIKEIRWNFINKDQREKYRHVHEWYVNNLLNRHVLLPSGEVTLQTRGNPSGQFSTTMDNNMVNFWLQAFEFAYFNGPDRDLWKTYDTVVYGDDRLSTTPSVPDDYEERVITMYRDIFGMWVKPGKVICRDSIVGLSFCGFTVNENLEPVPTSPEKLMASLLKPYKILPDLESLHGKLLCYQLLAAFMAEDHPFKVYVEHCLSRTAKQLRDSGLPARLTEEQLHRIWRGGPKKCDG</sequence>
<dbReference type="EC" id="3.4.21.-" evidence="2"/>
<dbReference type="EC" id="2.7.7.48"/>
<dbReference type="EMBL" id="Z25771">
    <property type="protein sequence ID" value="CAA81033.1"/>
    <property type="molecule type" value="Genomic_RNA"/>
</dbReference>
<dbReference type="PIR" id="C49529">
    <property type="entry name" value="C49529"/>
</dbReference>
<dbReference type="SMR" id="Q67726"/>
<dbReference type="IntAct" id="Q67726">
    <property type="interactions" value="1"/>
</dbReference>
<dbReference type="MEROPS" id="S01.109"/>
<dbReference type="KEGG" id="vg:29030992"/>
<dbReference type="Proteomes" id="UP000001650">
    <property type="component" value="Genome"/>
</dbReference>
<dbReference type="GO" id="GO:0033644">
    <property type="term" value="C:host cell membrane"/>
    <property type="evidence" value="ECO:0007669"/>
    <property type="project" value="UniProtKB-SubCell"/>
</dbReference>
<dbReference type="GO" id="GO:0016020">
    <property type="term" value="C:membrane"/>
    <property type="evidence" value="ECO:0007669"/>
    <property type="project" value="UniProtKB-KW"/>
</dbReference>
<dbReference type="GO" id="GO:0005524">
    <property type="term" value="F:ATP binding"/>
    <property type="evidence" value="ECO:0007669"/>
    <property type="project" value="UniProtKB-KW"/>
</dbReference>
<dbReference type="GO" id="GO:0003723">
    <property type="term" value="F:RNA binding"/>
    <property type="evidence" value="ECO:0007669"/>
    <property type="project" value="InterPro"/>
</dbReference>
<dbReference type="GO" id="GO:0003968">
    <property type="term" value="F:RNA-directed RNA polymerase activity"/>
    <property type="evidence" value="ECO:0007669"/>
    <property type="project" value="UniProtKB-KW"/>
</dbReference>
<dbReference type="GO" id="GO:0004252">
    <property type="term" value="F:serine-type endopeptidase activity"/>
    <property type="evidence" value="ECO:0007669"/>
    <property type="project" value="InterPro"/>
</dbReference>
<dbReference type="GO" id="GO:0070008">
    <property type="term" value="F:serine-type exopeptidase activity"/>
    <property type="evidence" value="ECO:0007669"/>
    <property type="project" value="InterPro"/>
</dbReference>
<dbReference type="GO" id="GO:0006351">
    <property type="term" value="P:DNA-templated transcription"/>
    <property type="evidence" value="ECO:0007669"/>
    <property type="project" value="InterPro"/>
</dbReference>
<dbReference type="GO" id="GO:0006508">
    <property type="term" value="P:proteolysis"/>
    <property type="evidence" value="ECO:0007669"/>
    <property type="project" value="UniProtKB-KW"/>
</dbReference>
<dbReference type="GO" id="GO:0039694">
    <property type="term" value="P:viral RNA genome replication"/>
    <property type="evidence" value="ECO:0007669"/>
    <property type="project" value="InterPro"/>
</dbReference>
<dbReference type="GO" id="GO:0075523">
    <property type="term" value="P:viral translational frameshifting"/>
    <property type="evidence" value="ECO:0007669"/>
    <property type="project" value="UniProtKB-KW"/>
</dbReference>
<dbReference type="CDD" id="cd23172">
    <property type="entry name" value="ps-ssRNAv_Astroviridae_RdRp"/>
    <property type="match status" value="1"/>
</dbReference>
<dbReference type="Gene3D" id="3.30.70.270">
    <property type="match status" value="1"/>
</dbReference>
<dbReference type="Gene3D" id="2.40.10.10">
    <property type="entry name" value="Trypsin-like serine proteases"/>
    <property type="match status" value="2"/>
</dbReference>
<dbReference type="InterPro" id="IPR045835">
    <property type="entry name" value="Astro_1A"/>
</dbReference>
<dbReference type="InterPro" id="IPR045833">
    <property type="entry name" value="Astro_p19"/>
</dbReference>
<dbReference type="InterPro" id="IPR045836">
    <property type="entry name" value="Astro_VPg"/>
</dbReference>
<dbReference type="InterPro" id="IPR043502">
    <property type="entry name" value="DNA/RNA_pol_sf"/>
</dbReference>
<dbReference type="InterPro" id="IPR022068">
    <property type="entry name" value="Mamastrovirus_p20"/>
</dbReference>
<dbReference type="InterPro" id="IPR009003">
    <property type="entry name" value="Peptidase_S1_PA"/>
</dbReference>
<dbReference type="InterPro" id="IPR043504">
    <property type="entry name" value="Peptidase_S1_PA_chymotrypsin"/>
</dbReference>
<dbReference type="InterPro" id="IPR043128">
    <property type="entry name" value="Rev_trsase/Diguanyl_cyclase"/>
</dbReference>
<dbReference type="InterPro" id="IPR001205">
    <property type="entry name" value="RNA-dir_pol_C"/>
</dbReference>
<dbReference type="InterPro" id="IPR007094">
    <property type="entry name" value="RNA-dir_pol_PSvirus"/>
</dbReference>
<dbReference type="Pfam" id="PF19415">
    <property type="entry name" value="Astro_1A"/>
    <property type="match status" value="1"/>
</dbReference>
<dbReference type="Pfam" id="PF19414">
    <property type="entry name" value="Astro_p19"/>
    <property type="match status" value="1"/>
</dbReference>
<dbReference type="Pfam" id="PF19416">
    <property type="entry name" value="Astro_VPg"/>
    <property type="match status" value="1"/>
</dbReference>
<dbReference type="Pfam" id="PF12285">
    <property type="entry name" value="Astrovir_pp_1"/>
    <property type="match status" value="1"/>
</dbReference>
<dbReference type="Pfam" id="PF00680">
    <property type="entry name" value="RdRP_1"/>
    <property type="match status" value="1"/>
</dbReference>
<dbReference type="Pfam" id="PF13365">
    <property type="entry name" value="Trypsin_2"/>
    <property type="match status" value="1"/>
</dbReference>
<dbReference type="SUPFAM" id="SSF56672">
    <property type="entry name" value="DNA/RNA polymerases"/>
    <property type="match status" value="1"/>
</dbReference>
<dbReference type="SUPFAM" id="SSF50494">
    <property type="entry name" value="Trypsin-like serine proteases"/>
    <property type="match status" value="1"/>
</dbReference>
<dbReference type="PROSITE" id="PS50507">
    <property type="entry name" value="RDRP_SSRNA_POS"/>
    <property type="match status" value="1"/>
</dbReference>
<accession>Q67726</accession>
<proteinExistence type="evidence at protein level"/>
<evidence type="ECO:0000250" key="1"/>
<evidence type="ECO:0000250" key="2">
    <source>
        <dbReference type="UniProtKB" id="P0C6K4"/>
    </source>
</evidence>
<evidence type="ECO:0000250" key="3">
    <source>
        <dbReference type="UniProtKB" id="Q3ZN07"/>
    </source>
</evidence>
<evidence type="ECO:0000255" key="4"/>
<evidence type="ECO:0000255" key="5">
    <source>
        <dbReference type="PROSITE-ProRule" id="PRU00539"/>
    </source>
</evidence>
<evidence type="ECO:0000256" key="6">
    <source>
        <dbReference type="SAM" id="MobiDB-lite"/>
    </source>
</evidence>
<evidence type="ECO:0000269" key="7">
    <source>
    </source>
</evidence>
<evidence type="ECO:0000305" key="8"/>
<organism>
    <name type="scientific">Human astrovirus-1</name>
    <name type="common">HAstV-1</name>
    <dbReference type="NCBI Taxonomy" id="12456"/>
    <lineage>
        <taxon>Viruses</taxon>
        <taxon>Riboviria</taxon>
        <taxon>Orthornavirae</taxon>
        <taxon>Pisuviricota</taxon>
        <taxon>Stelpaviricetes</taxon>
        <taxon>Stellavirales</taxon>
        <taxon>Astroviridae</taxon>
        <taxon>Mamastrovirus</taxon>
        <taxon>Mamastrovirus 1</taxon>
    </lineage>
</organism>